<feature type="chain" id="PRO_1000099555" description="UvrABC system protein B">
    <location>
        <begin position="1"/>
        <end position="671"/>
    </location>
</feature>
<feature type="domain" description="Helicase ATP-binding" evidence="1">
    <location>
        <begin position="31"/>
        <end position="189"/>
    </location>
</feature>
<feature type="domain" description="Helicase C-terminal" evidence="1">
    <location>
        <begin position="437"/>
        <end position="599"/>
    </location>
</feature>
<feature type="domain" description="UVR" evidence="1">
    <location>
        <begin position="634"/>
        <end position="669"/>
    </location>
</feature>
<feature type="short sequence motif" description="Beta-hairpin">
    <location>
        <begin position="97"/>
        <end position="120"/>
    </location>
</feature>
<feature type="binding site" evidence="1">
    <location>
        <begin position="44"/>
        <end position="51"/>
    </location>
    <ligand>
        <name>ATP</name>
        <dbReference type="ChEBI" id="CHEBI:30616"/>
    </ligand>
</feature>
<keyword id="KW-0067">ATP-binding</keyword>
<keyword id="KW-0963">Cytoplasm</keyword>
<keyword id="KW-0227">DNA damage</keyword>
<keyword id="KW-0228">DNA excision</keyword>
<keyword id="KW-0234">DNA repair</keyword>
<keyword id="KW-0267">Excision nuclease</keyword>
<keyword id="KW-0347">Helicase</keyword>
<keyword id="KW-0378">Hydrolase</keyword>
<keyword id="KW-0547">Nucleotide-binding</keyword>
<keyword id="KW-0742">SOS response</keyword>
<comment type="function">
    <text evidence="1">The UvrABC repair system catalyzes the recognition and processing of DNA lesions. A damage recognition complex composed of 2 UvrA and 2 UvrB subunits scans DNA for abnormalities. Upon binding of the UvrA(2)B(2) complex to a putative damaged site, the DNA wraps around one UvrB monomer. DNA wrap is dependent on ATP binding by UvrB and probably causes local melting of the DNA helix, facilitating insertion of UvrB beta-hairpin between the DNA strands. Then UvrB probes one DNA strand for the presence of a lesion. If a lesion is found the UvrA subunits dissociate and the UvrB-DNA preincision complex is formed. This complex is subsequently bound by UvrC and the second UvrB is released. If no lesion is found, the DNA wraps around the other UvrB subunit that will check the other stand for damage.</text>
</comment>
<comment type="subunit">
    <text evidence="1">Forms a heterotetramer with UvrA during the search for lesions. Interacts with UvrC in an incision complex.</text>
</comment>
<comment type="subcellular location">
    <subcellularLocation>
        <location evidence="1">Cytoplasm</location>
    </subcellularLocation>
</comment>
<comment type="domain">
    <text evidence="1">The beta-hairpin motif is involved in DNA binding.</text>
</comment>
<comment type="similarity">
    <text evidence="1">Belongs to the UvrB family.</text>
</comment>
<dbReference type="EMBL" id="FM177140">
    <property type="protein sequence ID" value="CAQ66156.1"/>
    <property type="molecule type" value="Genomic_DNA"/>
</dbReference>
<dbReference type="SMR" id="B3WCQ5"/>
<dbReference type="KEGG" id="lcb:LCABL_10700"/>
<dbReference type="HOGENOM" id="CLU_009621_2_1_9"/>
<dbReference type="GO" id="GO:0005737">
    <property type="term" value="C:cytoplasm"/>
    <property type="evidence" value="ECO:0007669"/>
    <property type="project" value="UniProtKB-SubCell"/>
</dbReference>
<dbReference type="GO" id="GO:0009380">
    <property type="term" value="C:excinuclease repair complex"/>
    <property type="evidence" value="ECO:0007669"/>
    <property type="project" value="InterPro"/>
</dbReference>
<dbReference type="GO" id="GO:0005524">
    <property type="term" value="F:ATP binding"/>
    <property type="evidence" value="ECO:0007669"/>
    <property type="project" value="UniProtKB-UniRule"/>
</dbReference>
<dbReference type="GO" id="GO:0016887">
    <property type="term" value="F:ATP hydrolysis activity"/>
    <property type="evidence" value="ECO:0007669"/>
    <property type="project" value="InterPro"/>
</dbReference>
<dbReference type="GO" id="GO:0003677">
    <property type="term" value="F:DNA binding"/>
    <property type="evidence" value="ECO:0007669"/>
    <property type="project" value="UniProtKB-UniRule"/>
</dbReference>
<dbReference type="GO" id="GO:0009381">
    <property type="term" value="F:excinuclease ABC activity"/>
    <property type="evidence" value="ECO:0007669"/>
    <property type="project" value="UniProtKB-UniRule"/>
</dbReference>
<dbReference type="GO" id="GO:0004386">
    <property type="term" value="F:helicase activity"/>
    <property type="evidence" value="ECO:0007669"/>
    <property type="project" value="UniProtKB-KW"/>
</dbReference>
<dbReference type="GO" id="GO:0006289">
    <property type="term" value="P:nucleotide-excision repair"/>
    <property type="evidence" value="ECO:0007669"/>
    <property type="project" value="UniProtKB-UniRule"/>
</dbReference>
<dbReference type="GO" id="GO:0009432">
    <property type="term" value="P:SOS response"/>
    <property type="evidence" value="ECO:0007669"/>
    <property type="project" value="UniProtKB-UniRule"/>
</dbReference>
<dbReference type="CDD" id="cd17916">
    <property type="entry name" value="DEXHc_UvrB"/>
    <property type="match status" value="1"/>
</dbReference>
<dbReference type="CDD" id="cd18790">
    <property type="entry name" value="SF2_C_UvrB"/>
    <property type="match status" value="1"/>
</dbReference>
<dbReference type="Gene3D" id="3.40.50.300">
    <property type="entry name" value="P-loop containing nucleotide triphosphate hydrolases"/>
    <property type="match status" value="3"/>
</dbReference>
<dbReference type="Gene3D" id="4.10.860.10">
    <property type="entry name" value="UVR domain"/>
    <property type="match status" value="1"/>
</dbReference>
<dbReference type="HAMAP" id="MF_00204">
    <property type="entry name" value="UvrB"/>
    <property type="match status" value="1"/>
</dbReference>
<dbReference type="InterPro" id="IPR006935">
    <property type="entry name" value="Helicase/UvrB_N"/>
</dbReference>
<dbReference type="InterPro" id="IPR014001">
    <property type="entry name" value="Helicase_ATP-bd"/>
</dbReference>
<dbReference type="InterPro" id="IPR001650">
    <property type="entry name" value="Helicase_C-like"/>
</dbReference>
<dbReference type="InterPro" id="IPR027417">
    <property type="entry name" value="P-loop_NTPase"/>
</dbReference>
<dbReference type="InterPro" id="IPR001943">
    <property type="entry name" value="UVR_dom"/>
</dbReference>
<dbReference type="InterPro" id="IPR036876">
    <property type="entry name" value="UVR_dom_sf"/>
</dbReference>
<dbReference type="InterPro" id="IPR004807">
    <property type="entry name" value="UvrB"/>
</dbReference>
<dbReference type="InterPro" id="IPR041471">
    <property type="entry name" value="UvrB_inter"/>
</dbReference>
<dbReference type="InterPro" id="IPR024759">
    <property type="entry name" value="UvrB_YAD/RRR_dom"/>
</dbReference>
<dbReference type="NCBIfam" id="NF003673">
    <property type="entry name" value="PRK05298.1"/>
    <property type="match status" value="1"/>
</dbReference>
<dbReference type="NCBIfam" id="TIGR00631">
    <property type="entry name" value="uvrb"/>
    <property type="match status" value="1"/>
</dbReference>
<dbReference type="PANTHER" id="PTHR24029">
    <property type="entry name" value="UVRABC SYSTEM PROTEIN B"/>
    <property type="match status" value="1"/>
</dbReference>
<dbReference type="PANTHER" id="PTHR24029:SF0">
    <property type="entry name" value="UVRABC SYSTEM PROTEIN B"/>
    <property type="match status" value="1"/>
</dbReference>
<dbReference type="Pfam" id="PF00271">
    <property type="entry name" value="Helicase_C"/>
    <property type="match status" value="1"/>
</dbReference>
<dbReference type="Pfam" id="PF04851">
    <property type="entry name" value="ResIII"/>
    <property type="match status" value="1"/>
</dbReference>
<dbReference type="Pfam" id="PF02151">
    <property type="entry name" value="UVR"/>
    <property type="match status" value="1"/>
</dbReference>
<dbReference type="Pfam" id="PF12344">
    <property type="entry name" value="UvrB"/>
    <property type="match status" value="1"/>
</dbReference>
<dbReference type="Pfam" id="PF17757">
    <property type="entry name" value="UvrB_inter"/>
    <property type="match status" value="1"/>
</dbReference>
<dbReference type="SMART" id="SM00487">
    <property type="entry name" value="DEXDc"/>
    <property type="match status" value="1"/>
</dbReference>
<dbReference type="SMART" id="SM00490">
    <property type="entry name" value="HELICc"/>
    <property type="match status" value="1"/>
</dbReference>
<dbReference type="SUPFAM" id="SSF46600">
    <property type="entry name" value="C-terminal UvrC-binding domain of UvrB"/>
    <property type="match status" value="1"/>
</dbReference>
<dbReference type="SUPFAM" id="SSF52540">
    <property type="entry name" value="P-loop containing nucleoside triphosphate hydrolases"/>
    <property type="match status" value="2"/>
</dbReference>
<dbReference type="PROSITE" id="PS51192">
    <property type="entry name" value="HELICASE_ATP_BIND_1"/>
    <property type="match status" value="1"/>
</dbReference>
<dbReference type="PROSITE" id="PS51194">
    <property type="entry name" value="HELICASE_CTER"/>
    <property type="match status" value="1"/>
</dbReference>
<dbReference type="PROSITE" id="PS50151">
    <property type="entry name" value="UVR"/>
    <property type="match status" value="1"/>
</dbReference>
<reference key="1">
    <citation type="submission" date="2008-06" db="EMBL/GenBank/DDBJ databases">
        <title>Lactobacillus casei BL23 complete genome sequence.</title>
        <authorList>
            <person name="Maze A."/>
            <person name="Boel G."/>
            <person name="Bourand A."/>
            <person name="Loux V."/>
            <person name="Gibrat J.F."/>
            <person name="Zuniga M."/>
            <person name="Hartke A."/>
            <person name="Deutscher J."/>
        </authorList>
    </citation>
    <scope>NUCLEOTIDE SEQUENCE [LARGE SCALE GENOMIC DNA]</scope>
    <source>
        <strain>BL23</strain>
    </source>
</reference>
<protein>
    <recommendedName>
        <fullName evidence="1">UvrABC system protein B</fullName>
        <shortName evidence="1">Protein UvrB</shortName>
    </recommendedName>
    <alternativeName>
        <fullName evidence="1">Excinuclease ABC subunit B</fullName>
    </alternativeName>
</protein>
<gene>
    <name evidence="1" type="primary">uvrB</name>
    <name type="ordered locus">LCABL_10700</name>
</gene>
<proteinExistence type="inferred from homology"/>
<name>UVRB_LACCB</name>
<organism>
    <name type="scientific">Lacticaseibacillus casei (strain BL23)</name>
    <name type="common">Lactobacillus casei</name>
    <dbReference type="NCBI Taxonomy" id="543734"/>
    <lineage>
        <taxon>Bacteria</taxon>
        <taxon>Bacillati</taxon>
        <taxon>Bacillota</taxon>
        <taxon>Bacilli</taxon>
        <taxon>Lactobacillales</taxon>
        <taxon>Lactobacillaceae</taxon>
        <taxon>Lacticaseibacillus</taxon>
    </lineage>
</organism>
<sequence length="671" mass="76715">MIERIADRKFDLVSPYQPAGDQPQAIAKLTKGFEEGKKEQILLGATGTGKTFTMSNIIANLNKPTLILSHNKTLAGQLYGEFKEFFPHNAVEYFVSYYDYYQPEAYVPSTDTYIEKDSAINDEIDKLRHSATSALLERNDVIVVASVSSIFGLGDPHEYKNHVLSLRTGMTIDRNTLLRQLVDIQFDRNDIDFQRGRFRVRGDVVEIFPASRDDHAIRVEFFGDEIDRITEVDALTGEVIGTRDHVAIFPATHFMTSDEQMQRAIKSIAAELEAQLKVLRSENKLLEAQRLEQRTNYDIEMMREMGFTSGIENYSRHMDGRKPGEPPYTLLDFFPKDFNIMVDESHVTMPQIRGMYNGDRARKQMLVNYGFRLPSALDNRPLKINEFEQHVHRILYVSATPGPYELDRVPKDDIAEQIIRPTGLLDPKIEVRPVMGQIDDLVGEINKRVDAHERVFITTLTKKMAEDLTDYLKDMGIKVRYLHSDIKTLERTQIIRDLRLGKFDVLIGINLLREGIDVPEVSLIAILDADKEGFLRAERSLIQTIGRASRNEHGKVIMYADKVTDSMKAAIDETQRRRTIQEKFNEEHHITPKTIIKPIRAAISSYEQSDDDKAEAKKTFAEVDYEDMSKADKKELVANLRSQMQAAAKKLDFEQAASLRDTILELQADMS</sequence>
<evidence type="ECO:0000255" key="1">
    <source>
        <dbReference type="HAMAP-Rule" id="MF_00204"/>
    </source>
</evidence>
<accession>B3WCQ5</accession>